<keyword id="KW-0010">Activator</keyword>
<keyword id="KW-0238">DNA-binding</keyword>
<keyword id="KW-0312">Gluconeogenesis</keyword>
<keyword id="KW-0479">Metal-binding</keyword>
<keyword id="KW-0539">Nucleus</keyword>
<keyword id="KW-1185">Reference proteome</keyword>
<keyword id="KW-0804">Transcription</keyword>
<keyword id="KW-0805">Transcription regulation</keyword>
<keyword id="KW-0862">Zinc</keyword>
<sequence>MTVDAQDSTPAPPADRRGAELETGGVGEQSEQPKNKSNGDGNAPAETGQKPNPKDPSRPRRKKARRACFACQRAHLTCGDERPCQRCIKRGLQDACHDGVRKKAKYLHDAPDGALMPGIGGNFYNNTMRSNLPLSRNGANAVNATTQPSSSPNFYPTPQSNSYSVYQENTMNQNSFTSQSPVSPTFTLKANPAARNNSLSSQVNQQPPSTGVSGATNPSQNPFAGPFFDPSDPALFNFDLSSMNFENRYGALEFGMLGHMATGAGDSPSDSATQRGSMGRSGSAQFSGTPITGAAAFGESPGGQQPFIFGDPLLNEWSSGQPTGQTHVNVGGVYPQSGQGSVIPGHLTKADAPHAFAIESGPGSFASPNATTSPQITTGFDDATFSSAVTAKSNGLSANGPRPTITTPSLKHQNLQVGVRRRQRNPSSIYENVKEPYAYTNRFHNLTAFIQRRFSPQKTLQIAKALASIRPSFIATTKTLNRDDLIFMEKCFQRTLFEYEDFINACGTPTIVCRRTGEIAAVGKEFSILTGWKKDVLLGKEPNLNVNTGGSVPGSGTSSRSFTPRGSVAESTPGRPQPVFLAELLDDDSVVEFYEDFARLAFGDSRGSVMTTCKLLKYKTKEDMENQSDDNQRWNSHLRKGGIASEAGMNQLGFKDGKIECAYCWTVKRDVFDIPMLIVMNASSTNLR</sequence>
<organism>
    <name type="scientific">Aspergillus oryzae (strain ATCC 42149 / RIB 40)</name>
    <name type="common">Yellow koji mold</name>
    <dbReference type="NCBI Taxonomy" id="510516"/>
    <lineage>
        <taxon>Eukaryota</taxon>
        <taxon>Fungi</taxon>
        <taxon>Dikarya</taxon>
        <taxon>Ascomycota</taxon>
        <taxon>Pezizomycotina</taxon>
        <taxon>Eurotiomycetes</taxon>
        <taxon>Eurotiomycetidae</taxon>
        <taxon>Eurotiales</taxon>
        <taxon>Aspergillaceae</taxon>
        <taxon>Aspergillus</taxon>
        <taxon>Aspergillus subgen. Circumdati</taxon>
    </lineage>
</organism>
<proteinExistence type="inferred from homology"/>
<gene>
    <name type="primary">acuK</name>
    <name type="ORF">AN7468</name>
</gene>
<comment type="function">
    <text evidence="1">Transcription factor which regulates nonfermentable carbon utilization. Activator of gluconeogenetic genes (By similarity).</text>
</comment>
<comment type="subcellular location">
    <subcellularLocation>
        <location evidence="2">Nucleus</location>
    </subcellularLocation>
</comment>
<comment type="similarity">
    <text evidence="4">Belongs to the ERT1/acuK family.</text>
</comment>
<dbReference type="EMBL" id="BA000050">
    <property type="protein sequence ID" value="BAE57193.1"/>
    <property type="molecule type" value="Genomic_DNA"/>
</dbReference>
<dbReference type="SMR" id="Q2UMM2"/>
<dbReference type="STRING" id="510516.Q2UMM2"/>
<dbReference type="EnsemblFungi" id="BAE57193">
    <property type="protein sequence ID" value="BAE57193"/>
    <property type="gene ID" value="AO090001000703"/>
</dbReference>
<dbReference type="HOGENOM" id="CLU_010748_1_0_1"/>
<dbReference type="OMA" id="VMTTCKL"/>
<dbReference type="Proteomes" id="UP000006564">
    <property type="component" value="Chromosome 2"/>
</dbReference>
<dbReference type="GO" id="GO:0005634">
    <property type="term" value="C:nucleus"/>
    <property type="evidence" value="ECO:0007669"/>
    <property type="project" value="UniProtKB-SubCell"/>
</dbReference>
<dbReference type="GO" id="GO:0000981">
    <property type="term" value="F:DNA-binding transcription factor activity, RNA polymerase II-specific"/>
    <property type="evidence" value="ECO:0007669"/>
    <property type="project" value="InterPro"/>
</dbReference>
<dbReference type="GO" id="GO:0000977">
    <property type="term" value="F:RNA polymerase II transcription regulatory region sequence-specific DNA binding"/>
    <property type="evidence" value="ECO:0007669"/>
    <property type="project" value="TreeGrafter"/>
</dbReference>
<dbReference type="GO" id="GO:0008270">
    <property type="term" value="F:zinc ion binding"/>
    <property type="evidence" value="ECO:0007669"/>
    <property type="project" value="InterPro"/>
</dbReference>
<dbReference type="GO" id="GO:0009267">
    <property type="term" value="P:cellular response to starvation"/>
    <property type="evidence" value="ECO:0007669"/>
    <property type="project" value="TreeGrafter"/>
</dbReference>
<dbReference type="GO" id="GO:0006094">
    <property type="term" value="P:gluconeogenesis"/>
    <property type="evidence" value="ECO:0007669"/>
    <property type="project" value="UniProtKB-KW"/>
</dbReference>
<dbReference type="GO" id="GO:0009893">
    <property type="term" value="P:positive regulation of metabolic process"/>
    <property type="evidence" value="ECO:0007669"/>
    <property type="project" value="UniProtKB-ARBA"/>
</dbReference>
<dbReference type="CDD" id="cd00067">
    <property type="entry name" value="GAL4"/>
    <property type="match status" value="1"/>
</dbReference>
<dbReference type="Gene3D" id="4.10.240.10">
    <property type="entry name" value="Zn(2)-C6 fungal-type DNA-binding domain"/>
    <property type="match status" value="1"/>
</dbReference>
<dbReference type="InterPro" id="IPR050335">
    <property type="entry name" value="ERT1_acuK_gluconeogen_tf"/>
</dbReference>
<dbReference type="InterPro" id="IPR056751">
    <property type="entry name" value="PAS_13"/>
</dbReference>
<dbReference type="InterPro" id="IPR036864">
    <property type="entry name" value="Zn2-C6_fun-type_DNA-bd_sf"/>
</dbReference>
<dbReference type="InterPro" id="IPR001138">
    <property type="entry name" value="Zn2Cys6_DnaBD"/>
</dbReference>
<dbReference type="PANTHER" id="PTHR47659:SF1">
    <property type="entry name" value="TRANSCRIPTION ACTIVATOR OF GLUCONEOGENESIS ERT1"/>
    <property type="match status" value="1"/>
</dbReference>
<dbReference type="PANTHER" id="PTHR47659">
    <property type="entry name" value="ZN(II)2CYS6 TRANSCRIPTION FACTOR (EUROFUNG)-RELATED"/>
    <property type="match status" value="1"/>
</dbReference>
<dbReference type="Pfam" id="PF24990">
    <property type="entry name" value="PAS_13"/>
    <property type="match status" value="1"/>
</dbReference>
<dbReference type="SMART" id="SM00066">
    <property type="entry name" value="GAL4"/>
    <property type="match status" value="1"/>
</dbReference>
<dbReference type="SUPFAM" id="SSF57701">
    <property type="entry name" value="Zn2/Cys6 DNA-binding domain"/>
    <property type="match status" value="1"/>
</dbReference>
<dbReference type="PROSITE" id="PS50048">
    <property type="entry name" value="ZN2_CY6_FUNGAL_2"/>
    <property type="match status" value="1"/>
</dbReference>
<reference key="1">
    <citation type="journal article" date="2005" name="Nature">
        <title>Genome sequencing and analysis of Aspergillus oryzae.</title>
        <authorList>
            <person name="Machida M."/>
            <person name="Asai K."/>
            <person name="Sano M."/>
            <person name="Tanaka T."/>
            <person name="Kumagai T."/>
            <person name="Terai G."/>
            <person name="Kusumoto K."/>
            <person name="Arima T."/>
            <person name="Akita O."/>
            <person name="Kashiwagi Y."/>
            <person name="Abe K."/>
            <person name="Gomi K."/>
            <person name="Horiuchi H."/>
            <person name="Kitamoto K."/>
            <person name="Kobayashi T."/>
            <person name="Takeuchi M."/>
            <person name="Denning D.W."/>
            <person name="Galagan J.E."/>
            <person name="Nierman W.C."/>
            <person name="Yu J."/>
            <person name="Archer D.B."/>
            <person name="Bennett J.W."/>
            <person name="Bhatnagar D."/>
            <person name="Cleveland T.E."/>
            <person name="Fedorova N.D."/>
            <person name="Gotoh O."/>
            <person name="Horikawa H."/>
            <person name="Hosoyama A."/>
            <person name="Ichinomiya M."/>
            <person name="Igarashi R."/>
            <person name="Iwashita K."/>
            <person name="Juvvadi P.R."/>
            <person name="Kato M."/>
            <person name="Kato Y."/>
            <person name="Kin T."/>
            <person name="Kokubun A."/>
            <person name="Maeda H."/>
            <person name="Maeyama N."/>
            <person name="Maruyama J."/>
            <person name="Nagasaki H."/>
            <person name="Nakajima T."/>
            <person name="Oda K."/>
            <person name="Okada K."/>
            <person name="Paulsen I."/>
            <person name="Sakamoto K."/>
            <person name="Sawano T."/>
            <person name="Takahashi M."/>
            <person name="Takase K."/>
            <person name="Terabayashi Y."/>
            <person name="Wortman J.R."/>
            <person name="Yamada O."/>
            <person name="Yamagata Y."/>
            <person name="Anazawa H."/>
            <person name="Hata Y."/>
            <person name="Koide Y."/>
            <person name="Komori T."/>
            <person name="Koyama Y."/>
            <person name="Minetoki T."/>
            <person name="Suharnan S."/>
            <person name="Tanaka A."/>
            <person name="Isono K."/>
            <person name="Kuhara S."/>
            <person name="Ogasawara N."/>
            <person name="Kikuchi H."/>
        </authorList>
    </citation>
    <scope>NUCLEOTIDE SEQUENCE [LARGE SCALE GENOMIC DNA]</scope>
    <source>
        <strain>ATCC 42149 / RIB 40</strain>
    </source>
</reference>
<feature type="chain" id="PRO_0000406434" description="Transcription activator of gluconeogenesis acuK">
    <location>
        <begin position="1"/>
        <end position="688"/>
    </location>
</feature>
<feature type="DNA-binding region" description="Zn(2)-C6 fungal-type" evidence="2">
    <location>
        <begin position="68"/>
        <end position="96"/>
    </location>
</feature>
<feature type="region of interest" description="Disordered" evidence="3">
    <location>
        <begin position="1"/>
        <end position="61"/>
    </location>
</feature>
<feature type="region of interest" description="Disordered" evidence="3">
    <location>
        <begin position="137"/>
        <end position="162"/>
    </location>
</feature>
<feature type="region of interest" description="Disordered" evidence="3">
    <location>
        <begin position="174"/>
        <end position="228"/>
    </location>
</feature>
<feature type="region of interest" description="Disordered" evidence="3">
    <location>
        <begin position="264"/>
        <end position="302"/>
    </location>
</feature>
<feature type="region of interest" description="Disordered" evidence="3">
    <location>
        <begin position="547"/>
        <end position="574"/>
    </location>
</feature>
<feature type="compositionally biased region" description="Polar residues" evidence="3">
    <location>
        <begin position="29"/>
        <end position="40"/>
    </location>
</feature>
<feature type="compositionally biased region" description="Polar residues" evidence="3">
    <location>
        <begin position="174"/>
        <end position="222"/>
    </location>
</feature>
<feature type="compositionally biased region" description="Polar residues" evidence="3">
    <location>
        <begin position="268"/>
        <end position="290"/>
    </location>
</feature>
<feature type="compositionally biased region" description="Low complexity" evidence="3">
    <location>
        <begin position="547"/>
        <end position="559"/>
    </location>
</feature>
<name>ACUK_ASPOR</name>
<accession>Q2UMM2</accession>
<protein>
    <recommendedName>
        <fullName>Transcription activator of gluconeogenesis acuK</fullName>
    </recommendedName>
</protein>
<evidence type="ECO:0000250" key="1"/>
<evidence type="ECO:0000255" key="2">
    <source>
        <dbReference type="PROSITE-ProRule" id="PRU00227"/>
    </source>
</evidence>
<evidence type="ECO:0000256" key="3">
    <source>
        <dbReference type="SAM" id="MobiDB-lite"/>
    </source>
</evidence>
<evidence type="ECO:0000305" key="4"/>